<dbReference type="EMBL" id="L43490">
    <property type="protein sequence ID" value="AAB02533.1"/>
    <property type="molecule type" value="Genomic_DNA"/>
</dbReference>
<dbReference type="EMBL" id="U28377">
    <property type="protein sequence ID" value="AAA69144.1"/>
    <property type="molecule type" value="Genomic_DNA"/>
</dbReference>
<dbReference type="EMBL" id="U00096">
    <property type="protein sequence ID" value="AAC76013.1"/>
    <property type="molecule type" value="Genomic_DNA"/>
</dbReference>
<dbReference type="EMBL" id="AP009048">
    <property type="protein sequence ID" value="BAE77037.1"/>
    <property type="molecule type" value="Genomic_DNA"/>
</dbReference>
<dbReference type="EMBL" id="X74547">
    <property type="status" value="NOT_ANNOTATED_CDS"/>
    <property type="molecule type" value="Genomic_DNA"/>
</dbReference>
<dbReference type="PIR" id="G65083">
    <property type="entry name" value="G65083"/>
</dbReference>
<dbReference type="RefSeq" id="NP_417451.1">
    <property type="nucleotide sequence ID" value="NC_000913.3"/>
</dbReference>
<dbReference type="RefSeq" id="WP_000853256.1">
    <property type="nucleotide sequence ID" value="NZ_STEB01000001.1"/>
</dbReference>
<dbReference type="SMR" id="P0AEQ1"/>
<dbReference type="BioGRID" id="4263078">
    <property type="interactions" value="9"/>
</dbReference>
<dbReference type="DIP" id="DIP-9766N"/>
<dbReference type="FunCoup" id="P0AEQ1">
    <property type="interactions" value="29"/>
</dbReference>
<dbReference type="STRING" id="511145.b2977"/>
<dbReference type="jPOST" id="P0AEQ1"/>
<dbReference type="PaxDb" id="511145-b2977"/>
<dbReference type="EnsemblBacteria" id="AAC76013">
    <property type="protein sequence ID" value="AAC76013"/>
    <property type="gene ID" value="b2977"/>
</dbReference>
<dbReference type="GeneID" id="947473"/>
<dbReference type="KEGG" id="ecj:JW2944"/>
<dbReference type="KEGG" id="eco:b2977"/>
<dbReference type="KEGG" id="ecoc:C3026_16285"/>
<dbReference type="PATRIC" id="fig|511145.12.peg.3071"/>
<dbReference type="EchoBASE" id="EB2786"/>
<dbReference type="eggNOG" id="COG3193">
    <property type="taxonomic scope" value="Bacteria"/>
</dbReference>
<dbReference type="HOGENOM" id="CLU_103773_1_2_6"/>
<dbReference type="InParanoid" id="P0AEQ1"/>
<dbReference type="OMA" id="NNWAVTI"/>
<dbReference type="OrthoDB" id="9800768at2"/>
<dbReference type="PhylomeDB" id="P0AEQ1"/>
<dbReference type="BioCyc" id="EcoCyc:G7543-MONOMER"/>
<dbReference type="PRO" id="PR:P0AEQ1"/>
<dbReference type="Proteomes" id="UP000000625">
    <property type="component" value="Chromosome"/>
</dbReference>
<dbReference type="Gene3D" id="3.30.450.150">
    <property type="entry name" value="Haem-degrading domain"/>
    <property type="match status" value="1"/>
</dbReference>
<dbReference type="InterPro" id="IPR052517">
    <property type="entry name" value="GlcG_carb_metab_protein"/>
</dbReference>
<dbReference type="InterPro" id="IPR005624">
    <property type="entry name" value="PduO/GlcC-like"/>
</dbReference>
<dbReference type="InterPro" id="IPR038084">
    <property type="entry name" value="PduO/GlcC-like_sf"/>
</dbReference>
<dbReference type="NCBIfam" id="NF007275">
    <property type="entry name" value="PRK09732.1"/>
    <property type="match status" value="1"/>
</dbReference>
<dbReference type="PANTHER" id="PTHR34309:SF1">
    <property type="entry name" value="PROTEIN GLCG"/>
    <property type="match status" value="1"/>
</dbReference>
<dbReference type="PANTHER" id="PTHR34309">
    <property type="entry name" value="SLR1406 PROTEIN"/>
    <property type="match status" value="1"/>
</dbReference>
<dbReference type="Pfam" id="PF03928">
    <property type="entry name" value="HbpS-like"/>
    <property type="match status" value="1"/>
</dbReference>
<dbReference type="SUPFAM" id="SSF143744">
    <property type="entry name" value="GlcG-like"/>
    <property type="match status" value="1"/>
</dbReference>
<organism>
    <name type="scientific">Escherichia coli (strain K12)</name>
    <dbReference type="NCBI Taxonomy" id="83333"/>
    <lineage>
        <taxon>Bacteria</taxon>
        <taxon>Pseudomonadati</taxon>
        <taxon>Pseudomonadota</taxon>
        <taxon>Gammaproteobacteria</taxon>
        <taxon>Enterobacterales</taxon>
        <taxon>Enterobacteriaceae</taxon>
        <taxon>Escherichia</taxon>
    </lineage>
</organism>
<protein>
    <recommendedName>
        <fullName>Protein GlcG</fullName>
    </recommendedName>
</protein>
<accession>P0AEQ1</accession>
<accession>P45504</accession>
<accession>Q2M9L9</accession>
<feature type="chain" id="PRO_0000087504" description="Protein GlcG">
    <location>
        <begin position="1"/>
        <end position="134"/>
    </location>
</feature>
<feature type="sequence conflict" description="In Ref. 4." evidence="4" ref="4">
    <original>AAAVLAK</original>
    <variation>QQRCWRNKRKRGDKQ</variation>
    <location>
        <begin position="128"/>
        <end position="134"/>
    </location>
</feature>
<name>GLCG_ECOLI</name>
<proteinExistence type="evidence at transcript level"/>
<comment type="induction">
    <text evidence="2">Part of the glcDEFGB operon, which is induced by growth on glycolate, under the positive control of GlcC. Also induced by growth on acetate. Expression of the glc operon is strongly dependent on the integration host factor (IHF) and is repressed by the global respiratory regulator ArcA-P.</text>
</comment>
<comment type="disruption phenotype">
    <text evidence="1">No effect on glycolate utilization.</text>
</comment>
<comment type="similarity">
    <text evidence="4">Belongs to the GlcG family.</text>
</comment>
<reference key="1">
    <citation type="journal article" date="1996" name="J. Bacteriol.">
        <title>glc locus of Escherichia coli: characterization of genes encoding the subunits of glycolate oxidase and the glc regulator protein.</title>
        <authorList>
            <person name="Pellicer M.T."/>
            <person name="Badia J."/>
            <person name="Aguilar J.T."/>
            <person name="Baldoma L."/>
        </authorList>
    </citation>
    <scope>NUCLEOTIDE SEQUENCE [GENOMIC DNA]</scope>
    <scope>DISRUPTION PHENOTYPE</scope>
    <source>
        <strain>K12 / W3110 / ATCC 27325 / DSM 5911</strain>
    </source>
</reference>
<reference key="2">
    <citation type="journal article" date="1997" name="Science">
        <title>The complete genome sequence of Escherichia coli K-12.</title>
        <authorList>
            <person name="Blattner F.R."/>
            <person name="Plunkett G. III"/>
            <person name="Bloch C.A."/>
            <person name="Perna N.T."/>
            <person name="Burland V."/>
            <person name="Riley M."/>
            <person name="Collado-Vides J."/>
            <person name="Glasner J.D."/>
            <person name="Rode C.K."/>
            <person name="Mayhew G.F."/>
            <person name="Gregor J."/>
            <person name="Davis N.W."/>
            <person name="Kirkpatrick H.A."/>
            <person name="Goeden M.A."/>
            <person name="Rose D.J."/>
            <person name="Mau B."/>
            <person name="Shao Y."/>
        </authorList>
    </citation>
    <scope>NUCLEOTIDE SEQUENCE [LARGE SCALE GENOMIC DNA]</scope>
    <source>
        <strain>K12 / MG1655 / ATCC 47076</strain>
    </source>
</reference>
<reference key="3">
    <citation type="journal article" date="2006" name="Mol. Syst. Biol.">
        <title>Highly accurate genome sequences of Escherichia coli K-12 strains MG1655 and W3110.</title>
        <authorList>
            <person name="Hayashi K."/>
            <person name="Morooka N."/>
            <person name="Yamamoto Y."/>
            <person name="Fujita K."/>
            <person name="Isono K."/>
            <person name="Choi S."/>
            <person name="Ohtsubo E."/>
            <person name="Baba T."/>
            <person name="Wanner B.L."/>
            <person name="Mori H."/>
            <person name="Horiuchi T."/>
        </authorList>
    </citation>
    <scope>NUCLEOTIDE SEQUENCE [LARGE SCALE GENOMIC DNA]</scope>
    <source>
        <strain>K12 / W3110 / ATCC 27325 / DSM 5911</strain>
    </source>
</reference>
<reference key="4">
    <citation type="journal article" date="1994" name="Eur. J. Biochem.">
        <title>Molecular characterization of Escherichia coli malate synthase G. Differentiation with the malate synthase A isoenzyme.</title>
        <authorList>
            <person name="Molina I."/>
            <person name="Badia J."/>
            <person name="Aguilar J.T."/>
            <person name="Pellicer M.T."/>
            <person name="Baldoma L."/>
        </authorList>
    </citation>
    <scope>NUCLEOTIDE SEQUENCE [GENOMIC DNA] OF 59-134</scope>
    <source>
        <strain>K12 / W3110 / ATCC 27325 / DSM 5911</strain>
    </source>
</reference>
<reference key="5">
    <citation type="journal article" date="1999" name="J. Biol. Chem.">
        <title>Cross-induction of glc and ace operons of Escherichia coli attributable to pathway intersection. Characterization of the glc promoter.</title>
        <authorList>
            <person name="Pellicer M.T."/>
            <person name="Fernandez C."/>
            <person name="Badia J."/>
            <person name="Aguilar J."/>
            <person name="Lin E.C."/>
            <person name="Baldom L."/>
        </authorList>
    </citation>
    <scope>INDUCTION</scope>
    <source>
        <strain>K12 / MC4100</strain>
    </source>
</reference>
<sequence length="134" mass="13737">MKTKVILSQQMASAIIAAGQEEAQKNNWSVSIAVADDGGHLLALSRMDDCAPIAAYISQEKARTAALGRRETKGYEEMVNNGRTAFVTAPLLTSLEGGVPVVVDGQIIGAVGVSGLTGAQDAQVAKAAAAVLAK</sequence>
<keyword id="KW-1185">Reference proteome</keyword>
<evidence type="ECO:0000269" key="1">
    <source>
    </source>
</evidence>
<evidence type="ECO:0000269" key="2">
    <source>
    </source>
</evidence>
<evidence type="ECO:0000303" key="3">
    <source>
    </source>
</evidence>
<evidence type="ECO:0000305" key="4"/>
<gene>
    <name evidence="3" type="primary">glcG</name>
    <name type="synonym">yghC</name>
    <name type="ordered locus">b2977</name>
    <name type="ordered locus">JW2944</name>
</gene>